<evidence type="ECO:0000255" key="1">
    <source>
        <dbReference type="HAMAP-Rule" id="MF_00089"/>
    </source>
</evidence>
<organism>
    <name type="scientific">Methanococcus maripaludis (strain DSM 14266 / JCM 13030 / NBRC 101832 / S2 / LL)</name>
    <dbReference type="NCBI Taxonomy" id="267377"/>
    <lineage>
        <taxon>Archaea</taxon>
        <taxon>Methanobacteriati</taxon>
        <taxon>Methanobacteriota</taxon>
        <taxon>Methanomada group</taxon>
        <taxon>Methanococci</taxon>
        <taxon>Methanococcales</taxon>
        <taxon>Methanococcaceae</taxon>
        <taxon>Methanococcus</taxon>
    </lineage>
</organism>
<proteinExistence type="inferred from homology"/>
<name>THIC_METMP</name>
<gene>
    <name evidence="1" type="primary">thiC</name>
    <name type="ordered locus">MMP0187</name>
</gene>
<comment type="function">
    <text evidence="1">Catalyzes the synthesis of the hydroxymethylpyrimidine phosphate (HMP-P) moiety of thiamine from aminoimidazole ribotide (AIR) in a radical S-adenosyl-L-methionine (SAM)-dependent reaction.</text>
</comment>
<comment type="catalytic activity">
    <reaction evidence="1">
        <text>5-amino-1-(5-phospho-beta-D-ribosyl)imidazole + S-adenosyl-L-methionine = 4-amino-2-methyl-5-(phosphooxymethyl)pyrimidine + CO + 5'-deoxyadenosine + formate + L-methionine + 3 H(+)</text>
        <dbReference type="Rhea" id="RHEA:24840"/>
        <dbReference type="ChEBI" id="CHEBI:15378"/>
        <dbReference type="ChEBI" id="CHEBI:15740"/>
        <dbReference type="ChEBI" id="CHEBI:17245"/>
        <dbReference type="ChEBI" id="CHEBI:17319"/>
        <dbReference type="ChEBI" id="CHEBI:57844"/>
        <dbReference type="ChEBI" id="CHEBI:58354"/>
        <dbReference type="ChEBI" id="CHEBI:59789"/>
        <dbReference type="ChEBI" id="CHEBI:137981"/>
        <dbReference type="EC" id="4.1.99.17"/>
    </reaction>
</comment>
<comment type="cofactor">
    <cofactor evidence="1">
        <name>[4Fe-4S] cluster</name>
        <dbReference type="ChEBI" id="CHEBI:49883"/>
    </cofactor>
    <text evidence="1">Binds 1 [4Fe-4S] cluster per subunit. The cluster is coordinated with 3 cysteines and an exchangeable S-adenosyl-L-methionine.</text>
</comment>
<comment type="pathway">
    <text evidence="1">Cofactor biosynthesis; thiamine diphosphate biosynthesis.</text>
</comment>
<comment type="similarity">
    <text evidence="1">Belongs to the ThiC family.</text>
</comment>
<sequence>MTQMTDAKSGITTEEMKFVAKEEGMDVETLKNLIAKGYVVIPKNVNRNTKPVGIGDNLRTKVNVNLGTSPDFIDIACELKKVEISNKYGADAIMDLSTGGNLPEIRKEIIKNTNLPIGTVPIYEVGVDAKEKYGRVIDMDEDLIFNVIERQAKEGVDFMTLHCGITKQTVSALNNDPRKMGVVSRGGAFLTAYIMYHDKENPLYKEFDYLLELLKEHDVTLSLGDGMRPGCLQDNTDRAQIQELITLGELVDKCREKGVQVMVEGPGHVPYNNIEANMKIQKTLCKNAPFYVLGPIVTDLAPGYDHITAAIGGTLAAVSGANFLCYVTPAEHVRLMKEDDVKEGLIASKIAAQAADVAKGHPVAWKLEKEMADARIKHDWERQFEIALDSNKPRKMREEIPSKDEKACSVCGDYCALLMVEELGKR</sequence>
<keyword id="KW-0004">4Fe-4S</keyword>
<keyword id="KW-0408">Iron</keyword>
<keyword id="KW-0411">Iron-sulfur</keyword>
<keyword id="KW-0456">Lyase</keyword>
<keyword id="KW-0479">Metal-binding</keyword>
<keyword id="KW-1185">Reference proteome</keyword>
<keyword id="KW-0949">S-adenosyl-L-methionine</keyword>
<keyword id="KW-0784">Thiamine biosynthesis</keyword>
<keyword id="KW-0862">Zinc</keyword>
<accession>P61428</accession>
<reference key="1">
    <citation type="journal article" date="2004" name="J. Bacteriol.">
        <title>Complete genome sequence of the genetically tractable hydrogenotrophic methanogen Methanococcus maripaludis.</title>
        <authorList>
            <person name="Hendrickson E.L."/>
            <person name="Kaul R."/>
            <person name="Zhou Y."/>
            <person name="Bovee D."/>
            <person name="Chapman P."/>
            <person name="Chung J."/>
            <person name="Conway de Macario E."/>
            <person name="Dodsworth J.A."/>
            <person name="Gillett W."/>
            <person name="Graham D.E."/>
            <person name="Hackett M."/>
            <person name="Haydock A.K."/>
            <person name="Kang A."/>
            <person name="Land M.L."/>
            <person name="Levy R."/>
            <person name="Lie T.J."/>
            <person name="Major T.A."/>
            <person name="Moore B.C."/>
            <person name="Porat I."/>
            <person name="Palmeiri A."/>
            <person name="Rouse G."/>
            <person name="Saenphimmachak C."/>
            <person name="Soell D."/>
            <person name="Van Dien S."/>
            <person name="Wang T."/>
            <person name="Whitman W.B."/>
            <person name="Xia Q."/>
            <person name="Zhang Y."/>
            <person name="Larimer F.W."/>
            <person name="Olson M.V."/>
            <person name="Leigh J.A."/>
        </authorList>
    </citation>
    <scope>NUCLEOTIDE SEQUENCE [LARGE SCALE GENOMIC DNA]</scope>
    <source>
        <strain>DSM 14266 / JCM 13030 / NBRC 101832 / S2 / LL</strain>
    </source>
</reference>
<protein>
    <recommendedName>
        <fullName evidence="1">Phosphomethylpyrimidine synthase</fullName>
        <ecNumber evidence="1">4.1.99.17</ecNumber>
    </recommendedName>
    <alternativeName>
        <fullName evidence="1">Hydroxymethylpyrimidine phosphate synthase</fullName>
        <shortName evidence="1">HMP-P synthase</shortName>
        <shortName evidence="1">HMP-phosphate synthase</shortName>
        <shortName evidence="1">HMPP synthase</shortName>
    </alternativeName>
    <alternativeName>
        <fullName evidence="1">Thiamine biosynthesis protein ThiC</fullName>
    </alternativeName>
</protein>
<feature type="chain" id="PRO_0000152866" description="Phosphomethylpyrimidine synthase">
    <location>
        <begin position="1"/>
        <end position="426"/>
    </location>
</feature>
<feature type="binding site" evidence="1">
    <location>
        <position position="65"/>
    </location>
    <ligand>
        <name>substrate</name>
    </ligand>
</feature>
<feature type="binding site" evidence="1">
    <location>
        <position position="94"/>
    </location>
    <ligand>
        <name>substrate</name>
    </ligand>
</feature>
<feature type="binding site" evidence="1">
    <location>
        <position position="123"/>
    </location>
    <ligand>
        <name>substrate</name>
    </ligand>
</feature>
<feature type="binding site" evidence="1">
    <location>
        <position position="162"/>
    </location>
    <ligand>
        <name>substrate</name>
    </ligand>
</feature>
<feature type="binding site" evidence="1">
    <location>
        <begin position="184"/>
        <end position="186"/>
    </location>
    <ligand>
        <name>substrate</name>
    </ligand>
</feature>
<feature type="binding site" evidence="1">
    <location>
        <begin position="225"/>
        <end position="228"/>
    </location>
    <ligand>
        <name>substrate</name>
    </ligand>
</feature>
<feature type="binding site" evidence="1">
    <location>
        <position position="264"/>
    </location>
    <ligand>
        <name>substrate</name>
    </ligand>
</feature>
<feature type="binding site" evidence="1">
    <location>
        <position position="268"/>
    </location>
    <ligand>
        <name>Zn(2+)</name>
        <dbReference type="ChEBI" id="CHEBI:29105"/>
    </ligand>
</feature>
<feature type="binding site" evidence="1">
    <location>
        <position position="291"/>
    </location>
    <ligand>
        <name>substrate</name>
    </ligand>
</feature>
<feature type="binding site" evidence="1">
    <location>
        <position position="332"/>
    </location>
    <ligand>
        <name>Zn(2+)</name>
        <dbReference type="ChEBI" id="CHEBI:29105"/>
    </ligand>
</feature>
<feature type="binding site" evidence="1">
    <location>
        <position position="408"/>
    </location>
    <ligand>
        <name>[4Fe-4S] cluster</name>
        <dbReference type="ChEBI" id="CHEBI:49883"/>
        <note>4Fe-4S-S-AdoMet</note>
    </ligand>
</feature>
<feature type="binding site" evidence="1">
    <location>
        <position position="411"/>
    </location>
    <ligand>
        <name>[4Fe-4S] cluster</name>
        <dbReference type="ChEBI" id="CHEBI:49883"/>
        <note>4Fe-4S-S-AdoMet</note>
    </ligand>
</feature>
<feature type="binding site" evidence="1">
    <location>
        <position position="415"/>
    </location>
    <ligand>
        <name>[4Fe-4S] cluster</name>
        <dbReference type="ChEBI" id="CHEBI:49883"/>
        <note>4Fe-4S-S-AdoMet</note>
    </ligand>
</feature>
<dbReference type="EC" id="4.1.99.17" evidence="1"/>
<dbReference type="EMBL" id="BX950229">
    <property type="protein sequence ID" value="CAF29743.1"/>
    <property type="molecule type" value="Genomic_DNA"/>
</dbReference>
<dbReference type="RefSeq" id="WP_011170131.1">
    <property type="nucleotide sequence ID" value="NC_005791.1"/>
</dbReference>
<dbReference type="SMR" id="P61428"/>
<dbReference type="STRING" id="267377.MMP0187"/>
<dbReference type="EnsemblBacteria" id="CAF29743">
    <property type="protein sequence ID" value="CAF29743"/>
    <property type="gene ID" value="MMP0187"/>
</dbReference>
<dbReference type="GeneID" id="2762380"/>
<dbReference type="KEGG" id="mmp:MMP0187"/>
<dbReference type="PATRIC" id="fig|267377.15.peg.191"/>
<dbReference type="eggNOG" id="arCOG02741">
    <property type="taxonomic scope" value="Archaea"/>
</dbReference>
<dbReference type="HOGENOM" id="CLU_013181_2_2_2"/>
<dbReference type="OrthoDB" id="335406at2157"/>
<dbReference type="UniPathway" id="UPA00060"/>
<dbReference type="Proteomes" id="UP000000590">
    <property type="component" value="Chromosome"/>
</dbReference>
<dbReference type="GO" id="GO:0051539">
    <property type="term" value="F:4 iron, 4 sulfur cluster binding"/>
    <property type="evidence" value="ECO:0007669"/>
    <property type="project" value="UniProtKB-KW"/>
</dbReference>
<dbReference type="GO" id="GO:0016830">
    <property type="term" value="F:carbon-carbon lyase activity"/>
    <property type="evidence" value="ECO:0007669"/>
    <property type="project" value="InterPro"/>
</dbReference>
<dbReference type="GO" id="GO:0008270">
    <property type="term" value="F:zinc ion binding"/>
    <property type="evidence" value="ECO:0007669"/>
    <property type="project" value="UniProtKB-UniRule"/>
</dbReference>
<dbReference type="GO" id="GO:0009228">
    <property type="term" value="P:thiamine biosynthetic process"/>
    <property type="evidence" value="ECO:0007669"/>
    <property type="project" value="UniProtKB-KW"/>
</dbReference>
<dbReference type="GO" id="GO:0009229">
    <property type="term" value="P:thiamine diphosphate biosynthetic process"/>
    <property type="evidence" value="ECO:0007669"/>
    <property type="project" value="UniProtKB-UniRule"/>
</dbReference>
<dbReference type="FunFam" id="3.20.20.540:FF:000001">
    <property type="entry name" value="Phosphomethylpyrimidine synthase"/>
    <property type="match status" value="1"/>
</dbReference>
<dbReference type="Gene3D" id="3.20.20.540">
    <property type="entry name" value="Radical SAM ThiC family, central domain"/>
    <property type="match status" value="1"/>
</dbReference>
<dbReference type="HAMAP" id="MF_00089">
    <property type="entry name" value="ThiC"/>
    <property type="match status" value="1"/>
</dbReference>
<dbReference type="InterPro" id="IPR037509">
    <property type="entry name" value="ThiC"/>
</dbReference>
<dbReference type="InterPro" id="IPR038521">
    <property type="entry name" value="ThiC/Bza_core_dom"/>
</dbReference>
<dbReference type="InterPro" id="IPR002817">
    <property type="entry name" value="ThiC/BzaA/B"/>
</dbReference>
<dbReference type="NCBIfam" id="NF009895">
    <property type="entry name" value="PRK13352.1"/>
    <property type="match status" value="1"/>
</dbReference>
<dbReference type="NCBIfam" id="TIGR00190">
    <property type="entry name" value="thiC"/>
    <property type="match status" value="1"/>
</dbReference>
<dbReference type="PANTHER" id="PTHR30557:SF1">
    <property type="entry name" value="PHOSPHOMETHYLPYRIMIDINE SYNTHASE, CHLOROPLASTIC"/>
    <property type="match status" value="1"/>
</dbReference>
<dbReference type="PANTHER" id="PTHR30557">
    <property type="entry name" value="THIAMINE BIOSYNTHESIS PROTEIN THIC"/>
    <property type="match status" value="1"/>
</dbReference>
<dbReference type="Pfam" id="PF01964">
    <property type="entry name" value="ThiC_Rad_SAM"/>
    <property type="match status" value="1"/>
</dbReference>
<dbReference type="SFLD" id="SFLDF00407">
    <property type="entry name" value="phosphomethylpyrimidine_syntha"/>
    <property type="match status" value="1"/>
</dbReference>
<dbReference type="SFLD" id="SFLDG01114">
    <property type="entry name" value="phosphomethylpyrimidine_syntha"/>
    <property type="match status" value="1"/>
</dbReference>
<dbReference type="SFLD" id="SFLDS00113">
    <property type="entry name" value="Radical_SAM_Phosphomethylpyrim"/>
    <property type="match status" value="1"/>
</dbReference>